<gene>
    <name evidence="1" type="primary">rexB</name>
    <name type="ordered locus">LGAS_1032</name>
</gene>
<evidence type="ECO:0000255" key="1">
    <source>
        <dbReference type="HAMAP-Rule" id="MF_01453"/>
    </source>
</evidence>
<sequence length="1158" mass="133949">MINVITGRQVDNLQNEIIDQAVKSYYQDKTHDVFIIVPNHIKFTTEVRALSKLSVLTNKKQVAVNKLHILSFSRLAWYFLKDEAIKLPQILDDAASVMLLEQIVKDHQDELKLFQNKNQITSGALRQMYEAILSVRAGNIDLENIDNEKLNEETSYKVHDLQIIYDDFIDRLSEKFATKDEMQLLLNEFLAKSDSLSTMVFYFSDFSHFSLQELTSVRLISKKAKNTTLAFKTKIGKIDSKAEQGDYDYVVQRTIRQLEHFWQNQQLNYQTTEFPLTKTNPSSLLNGVWTKTNGFDESLSKFLQPVKADSRYAEAYFVARTIYQQVALNNYRYQDFLVLAPNLNEYETYLTPILRQNNIPFFNDLQKEMKYHPLVVAVENLQQIFKRGFQTDNVIALMKTQLFIPEWYKSVARYQNDVDLLENFVLAHGIKGELWKKPLKSFVDAEVIALDKSEQEVEELDRLRKYFISILSEFFEDIETEKDPQAGVTIFWNFLIKNRVAKRLEAWRKEANDAGDLQLAQQPEQVWSTLNDLLKDYLLVAKEFSLEQFFDLLISGFSEANFSQIPSTLDAVNISEMGMVQGQGYKQVFIIGATSSNLPQIEKIPGFFSSENLEQLNDGNNASGYLEDQQKINNLDQNYQFGNALSLASDKIYISYPVINTANEQLEPSIFYKQLLRLTQANEFSQHDLPSSAGDLLTFMTNPEASLGYLTYLKGKQEVNVDSILELTEQEIGEVAQNVLEGSNFKNVPENLPPKLAQELYGDRIETSVSQLETYYQNSFEYFLNYGLHLKKRFENELDVIQAGNYYHETFDYLVKKIKEKNLDFADLTDSKLNQLLIEVREELKEKGRYRQLLNDPFNKYLFHKLDQTTSNVAHYWHSNVNKTTFRPQYSELSFGKNQKVTGLSYSWKDENNQKKIVDLRGKMDRVDLAKVNDRVLGEVIDYKSSAKKFDLGLFANGISMQMISYLEVLKKNNKFFAQGKNLDVLGAFYQNITSSLERLSSDKMILSNYQIKDLLKESTKKLMYNGILVADEEILDLIEPGMEKDRATSEIYSSIKRKVNGDISWPRNQSFTPDQLELLLAYNSYLIKNAGSEILSGKIKLDPYTYGQQSSLTYSDFKDIFFFDAMLKENNYHKIKAIDKKTLLNLIKEKLDLDGDE</sequence>
<keyword id="KW-0067">ATP-binding</keyword>
<keyword id="KW-0227">DNA damage</keyword>
<keyword id="KW-0234">DNA repair</keyword>
<keyword id="KW-0238">DNA-binding</keyword>
<keyword id="KW-0269">Exonuclease</keyword>
<keyword id="KW-0347">Helicase</keyword>
<keyword id="KW-0378">Hydrolase</keyword>
<keyword id="KW-0540">Nuclease</keyword>
<keyword id="KW-0547">Nucleotide-binding</keyword>
<feature type="chain" id="PRO_0000379372" description="ATP-dependent helicase/deoxyribonuclease subunit B">
    <location>
        <begin position="1"/>
        <end position="1158"/>
    </location>
</feature>
<protein>
    <recommendedName>
        <fullName evidence="1">ATP-dependent helicase/deoxyribonuclease subunit B</fullName>
        <ecNumber evidence="1">3.1.-.-</ecNumber>
    </recommendedName>
    <alternativeName>
        <fullName evidence="1">ATP-dependent helicase/nuclease subunit RexB</fullName>
    </alternativeName>
</protein>
<proteinExistence type="inferred from homology"/>
<dbReference type="EC" id="3.1.-.-" evidence="1"/>
<dbReference type="EMBL" id="CP000413">
    <property type="protein sequence ID" value="ABJ60407.1"/>
    <property type="molecule type" value="Genomic_DNA"/>
</dbReference>
<dbReference type="RefSeq" id="WP_003647272.1">
    <property type="nucleotide sequence ID" value="NZ_WBMG01000008.1"/>
</dbReference>
<dbReference type="SMR" id="Q043G5"/>
<dbReference type="GeneID" id="29638793"/>
<dbReference type="KEGG" id="lga:LGAS_1032"/>
<dbReference type="HOGENOM" id="CLU_007838_0_0_9"/>
<dbReference type="BioCyc" id="LGAS324831:G1G6Y-1032-MONOMER"/>
<dbReference type="Proteomes" id="UP000000664">
    <property type="component" value="Chromosome"/>
</dbReference>
<dbReference type="GO" id="GO:0008409">
    <property type="term" value="F:5'-3' exonuclease activity"/>
    <property type="evidence" value="ECO:0007669"/>
    <property type="project" value="UniProtKB-UniRule"/>
</dbReference>
<dbReference type="GO" id="GO:0005524">
    <property type="term" value="F:ATP binding"/>
    <property type="evidence" value="ECO:0007669"/>
    <property type="project" value="UniProtKB-UniRule"/>
</dbReference>
<dbReference type="GO" id="GO:0003690">
    <property type="term" value="F:double-stranded DNA binding"/>
    <property type="evidence" value="ECO:0007669"/>
    <property type="project" value="UniProtKB-UniRule"/>
</dbReference>
<dbReference type="GO" id="GO:0004386">
    <property type="term" value="F:helicase activity"/>
    <property type="evidence" value="ECO:0007669"/>
    <property type="project" value="UniProtKB-KW"/>
</dbReference>
<dbReference type="GO" id="GO:0016817">
    <property type="term" value="F:hydrolase activity, acting on acid anhydrides"/>
    <property type="evidence" value="ECO:0007669"/>
    <property type="project" value="InterPro"/>
</dbReference>
<dbReference type="GO" id="GO:0000724">
    <property type="term" value="P:double-strand break repair via homologous recombination"/>
    <property type="evidence" value="ECO:0007669"/>
    <property type="project" value="UniProtKB-UniRule"/>
</dbReference>
<dbReference type="Gene3D" id="3.40.50.300">
    <property type="entry name" value="P-loop containing nucleotide triphosphate hydrolases"/>
    <property type="match status" value="3"/>
</dbReference>
<dbReference type="HAMAP" id="MF_01453">
    <property type="entry name" value="AddB_type2"/>
    <property type="match status" value="1"/>
</dbReference>
<dbReference type="InterPro" id="IPR049035">
    <property type="entry name" value="ADDB_N"/>
</dbReference>
<dbReference type="InterPro" id="IPR014141">
    <property type="entry name" value="DNA_helicase_suRexB"/>
</dbReference>
<dbReference type="InterPro" id="IPR027417">
    <property type="entry name" value="P-loop_NTPase"/>
</dbReference>
<dbReference type="InterPro" id="IPR038726">
    <property type="entry name" value="PDDEXK_AddAB-type"/>
</dbReference>
<dbReference type="PANTHER" id="PTHR30591">
    <property type="entry name" value="RECBCD ENZYME SUBUNIT RECC"/>
    <property type="match status" value="1"/>
</dbReference>
<dbReference type="PANTHER" id="PTHR30591:SF1">
    <property type="entry name" value="RECBCD ENZYME SUBUNIT RECC"/>
    <property type="match status" value="1"/>
</dbReference>
<dbReference type="Pfam" id="PF21445">
    <property type="entry name" value="ADDB_N"/>
    <property type="match status" value="1"/>
</dbReference>
<dbReference type="Pfam" id="PF12705">
    <property type="entry name" value="PDDEXK_1"/>
    <property type="match status" value="1"/>
</dbReference>
<dbReference type="SUPFAM" id="SSF52540">
    <property type="entry name" value="P-loop containing nucleoside triphosphate hydrolases"/>
    <property type="match status" value="1"/>
</dbReference>
<reference key="1">
    <citation type="journal article" date="2006" name="Proc. Natl. Acad. Sci. U.S.A.">
        <title>Comparative genomics of the lactic acid bacteria.</title>
        <authorList>
            <person name="Makarova K.S."/>
            <person name="Slesarev A."/>
            <person name="Wolf Y.I."/>
            <person name="Sorokin A."/>
            <person name="Mirkin B."/>
            <person name="Koonin E.V."/>
            <person name="Pavlov A."/>
            <person name="Pavlova N."/>
            <person name="Karamychev V."/>
            <person name="Polouchine N."/>
            <person name="Shakhova V."/>
            <person name="Grigoriev I."/>
            <person name="Lou Y."/>
            <person name="Rohksar D."/>
            <person name="Lucas S."/>
            <person name="Huang K."/>
            <person name="Goodstein D.M."/>
            <person name="Hawkins T."/>
            <person name="Plengvidhya V."/>
            <person name="Welker D."/>
            <person name="Hughes J."/>
            <person name="Goh Y."/>
            <person name="Benson A."/>
            <person name="Baldwin K."/>
            <person name="Lee J.-H."/>
            <person name="Diaz-Muniz I."/>
            <person name="Dosti B."/>
            <person name="Smeianov V."/>
            <person name="Wechter W."/>
            <person name="Barabote R."/>
            <person name="Lorca G."/>
            <person name="Altermann E."/>
            <person name="Barrangou R."/>
            <person name="Ganesan B."/>
            <person name="Xie Y."/>
            <person name="Rawsthorne H."/>
            <person name="Tamir D."/>
            <person name="Parker C."/>
            <person name="Breidt F."/>
            <person name="Broadbent J.R."/>
            <person name="Hutkins R."/>
            <person name="O'Sullivan D."/>
            <person name="Steele J."/>
            <person name="Unlu G."/>
            <person name="Saier M.H. Jr."/>
            <person name="Klaenhammer T."/>
            <person name="Richardson P."/>
            <person name="Kozyavkin S."/>
            <person name="Weimer B.C."/>
            <person name="Mills D.A."/>
        </authorList>
    </citation>
    <scope>NUCLEOTIDE SEQUENCE [LARGE SCALE GENOMIC DNA]</scope>
    <source>
        <strain>ATCC 33323 / DSM 20243 / BCRC 14619 / CIP 102991 / JCM 1131 / KCTC 3163 / NCIMB 11718 / NCTC 13722 / AM63</strain>
    </source>
</reference>
<comment type="function">
    <text evidence="1">The heterodimer acts as both an ATP-dependent DNA helicase and an ATP-dependent, dual-direction single-stranded exonuclease. Recognizes the chi site generating a DNA molecule suitable for the initiation of homologous recombination. This subunit has 5' -&gt; 3' nuclease activity but not helicase activity.</text>
</comment>
<comment type="cofactor">
    <cofactor evidence="1">
        <name>Mg(2+)</name>
        <dbReference type="ChEBI" id="CHEBI:18420"/>
    </cofactor>
</comment>
<comment type="subunit">
    <text evidence="1">Heterodimer of AddA and RexB.</text>
</comment>
<comment type="miscellaneous">
    <text evidence="1">Despite having helicase-like domains, this subunit does not have helicase activity.</text>
</comment>
<comment type="similarity">
    <text evidence="1">Belongs to the helicase family. AddB/RexB type 2 subfamily.</text>
</comment>
<accession>Q043G5</accession>
<organism>
    <name type="scientific">Lactobacillus gasseri (strain ATCC 33323 / DSM 20243 / BCRC 14619 / CIP 102991 / JCM 1131 / KCTC 3163 / NCIMB 11718 / NCTC 13722 / AM63)</name>
    <dbReference type="NCBI Taxonomy" id="324831"/>
    <lineage>
        <taxon>Bacteria</taxon>
        <taxon>Bacillati</taxon>
        <taxon>Bacillota</taxon>
        <taxon>Bacilli</taxon>
        <taxon>Lactobacillales</taxon>
        <taxon>Lactobacillaceae</taxon>
        <taxon>Lactobacillus</taxon>
    </lineage>
</organism>
<name>ADDB_LACGA</name>